<dbReference type="EC" id="6.3.5.-" evidence="1"/>
<dbReference type="EMBL" id="CP000697">
    <property type="protein sequence ID" value="ABQ30091.1"/>
    <property type="molecule type" value="Genomic_DNA"/>
</dbReference>
<dbReference type="RefSeq" id="WP_011941835.1">
    <property type="nucleotide sequence ID" value="NC_009484.1"/>
</dbReference>
<dbReference type="SMR" id="A5FWV9"/>
<dbReference type="STRING" id="349163.Acry_0872"/>
<dbReference type="KEGG" id="acr:Acry_0872"/>
<dbReference type="eggNOG" id="COG0721">
    <property type="taxonomic scope" value="Bacteria"/>
</dbReference>
<dbReference type="HOGENOM" id="CLU_105899_2_0_5"/>
<dbReference type="Proteomes" id="UP000000245">
    <property type="component" value="Chromosome"/>
</dbReference>
<dbReference type="GO" id="GO:0050566">
    <property type="term" value="F:asparaginyl-tRNA synthase (glutamine-hydrolyzing) activity"/>
    <property type="evidence" value="ECO:0007669"/>
    <property type="project" value="RHEA"/>
</dbReference>
<dbReference type="GO" id="GO:0005524">
    <property type="term" value="F:ATP binding"/>
    <property type="evidence" value="ECO:0007669"/>
    <property type="project" value="UniProtKB-KW"/>
</dbReference>
<dbReference type="GO" id="GO:0050567">
    <property type="term" value="F:glutaminyl-tRNA synthase (glutamine-hydrolyzing) activity"/>
    <property type="evidence" value="ECO:0007669"/>
    <property type="project" value="UniProtKB-UniRule"/>
</dbReference>
<dbReference type="GO" id="GO:0070681">
    <property type="term" value="P:glutaminyl-tRNAGln biosynthesis via transamidation"/>
    <property type="evidence" value="ECO:0007669"/>
    <property type="project" value="TreeGrafter"/>
</dbReference>
<dbReference type="GO" id="GO:0006450">
    <property type="term" value="P:regulation of translational fidelity"/>
    <property type="evidence" value="ECO:0007669"/>
    <property type="project" value="InterPro"/>
</dbReference>
<dbReference type="GO" id="GO:0006412">
    <property type="term" value="P:translation"/>
    <property type="evidence" value="ECO:0007669"/>
    <property type="project" value="UniProtKB-UniRule"/>
</dbReference>
<dbReference type="Gene3D" id="1.10.20.60">
    <property type="entry name" value="Glu-tRNAGln amidotransferase C subunit, N-terminal domain"/>
    <property type="match status" value="1"/>
</dbReference>
<dbReference type="HAMAP" id="MF_00122">
    <property type="entry name" value="GatC"/>
    <property type="match status" value="1"/>
</dbReference>
<dbReference type="InterPro" id="IPR036113">
    <property type="entry name" value="Asp/Glu-ADT_sf_sub_c"/>
</dbReference>
<dbReference type="InterPro" id="IPR003837">
    <property type="entry name" value="GatC"/>
</dbReference>
<dbReference type="NCBIfam" id="TIGR00135">
    <property type="entry name" value="gatC"/>
    <property type="match status" value="1"/>
</dbReference>
<dbReference type="PANTHER" id="PTHR15004">
    <property type="entry name" value="GLUTAMYL-TRNA(GLN) AMIDOTRANSFERASE SUBUNIT C, MITOCHONDRIAL"/>
    <property type="match status" value="1"/>
</dbReference>
<dbReference type="PANTHER" id="PTHR15004:SF0">
    <property type="entry name" value="GLUTAMYL-TRNA(GLN) AMIDOTRANSFERASE SUBUNIT C, MITOCHONDRIAL"/>
    <property type="match status" value="1"/>
</dbReference>
<dbReference type="Pfam" id="PF02686">
    <property type="entry name" value="GatC"/>
    <property type="match status" value="1"/>
</dbReference>
<dbReference type="SUPFAM" id="SSF141000">
    <property type="entry name" value="Glu-tRNAGln amidotransferase C subunit"/>
    <property type="match status" value="1"/>
</dbReference>
<reference key="1">
    <citation type="submission" date="2007-05" db="EMBL/GenBank/DDBJ databases">
        <title>Complete sequence of chromosome of Acidiphilium cryptum JF-5.</title>
        <authorList>
            <consortium name="US DOE Joint Genome Institute"/>
            <person name="Copeland A."/>
            <person name="Lucas S."/>
            <person name="Lapidus A."/>
            <person name="Barry K."/>
            <person name="Detter J.C."/>
            <person name="Glavina del Rio T."/>
            <person name="Hammon N."/>
            <person name="Israni S."/>
            <person name="Dalin E."/>
            <person name="Tice H."/>
            <person name="Pitluck S."/>
            <person name="Sims D."/>
            <person name="Brettin T."/>
            <person name="Bruce D."/>
            <person name="Han C."/>
            <person name="Schmutz J."/>
            <person name="Larimer F."/>
            <person name="Land M."/>
            <person name="Hauser L."/>
            <person name="Kyrpides N."/>
            <person name="Kim E."/>
            <person name="Magnuson T."/>
            <person name="Richardson P."/>
        </authorList>
    </citation>
    <scope>NUCLEOTIDE SEQUENCE [LARGE SCALE GENOMIC DNA]</scope>
    <source>
        <strain>JF-5</strain>
    </source>
</reference>
<proteinExistence type="inferred from homology"/>
<name>GATC_ACICJ</name>
<keyword id="KW-0067">ATP-binding</keyword>
<keyword id="KW-0436">Ligase</keyword>
<keyword id="KW-0547">Nucleotide-binding</keyword>
<keyword id="KW-0648">Protein biosynthesis</keyword>
<keyword id="KW-1185">Reference proteome</keyword>
<protein>
    <recommendedName>
        <fullName evidence="1">Aspartyl/glutamyl-tRNA(Asn/Gln) amidotransferase subunit C</fullName>
        <shortName evidence="1">Asp/Glu-ADT subunit C</shortName>
        <ecNumber evidence="1">6.3.5.-</ecNumber>
    </recommendedName>
</protein>
<organism>
    <name type="scientific">Acidiphilium cryptum (strain JF-5)</name>
    <dbReference type="NCBI Taxonomy" id="349163"/>
    <lineage>
        <taxon>Bacteria</taxon>
        <taxon>Pseudomonadati</taxon>
        <taxon>Pseudomonadota</taxon>
        <taxon>Alphaproteobacteria</taxon>
        <taxon>Acetobacterales</taxon>
        <taxon>Acidocellaceae</taxon>
        <taxon>Acidiphilium</taxon>
    </lineage>
</organism>
<sequence>MSLDHATVRRIAKLARIRLDEEEVPRLAGELNAILGYVEQLAEVDVEGVAPLSGGAQMALRMREDEVTDGRYPDRVLANAPERIGDFFAVPKVVE</sequence>
<gene>
    <name evidence="1" type="primary">gatC</name>
    <name type="ordered locus">Acry_0872</name>
</gene>
<feature type="chain" id="PRO_1000016059" description="Aspartyl/glutamyl-tRNA(Asn/Gln) amidotransferase subunit C">
    <location>
        <begin position="1"/>
        <end position="95"/>
    </location>
</feature>
<accession>A5FWV9</accession>
<comment type="function">
    <text evidence="1">Allows the formation of correctly charged Asn-tRNA(Asn) or Gln-tRNA(Gln) through the transamidation of misacylated Asp-tRNA(Asn) or Glu-tRNA(Gln) in organisms which lack either or both of asparaginyl-tRNA or glutaminyl-tRNA synthetases. The reaction takes place in the presence of glutamine and ATP through an activated phospho-Asp-tRNA(Asn) or phospho-Glu-tRNA(Gln).</text>
</comment>
<comment type="catalytic activity">
    <reaction evidence="1">
        <text>L-glutamyl-tRNA(Gln) + L-glutamine + ATP + H2O = L-glutaminyl-tRNA(Gln) + L-glutamate + ADP + phosphate + H(+)</text>
        <dbReference type="Rhea" id="RHEA:17521"/>
        <dbReference type="Rhea" id="RHEA-COMP:9681"/>
        <dbReference type="Rhea" id="RHEA-COMP:9684"/>
        <dbReference type="ChEBI" id="CHEBI:15377"/>
        <dbReference type="ChEBI" id="CHEBI:15378"/>
        <dbReference type="ChEBI" id="CHEBI:29985"/>
        <dbReference type="ChEBI" id="CHEBI:30616"/>
        <dbReference type="ChEBI" id="CHEBI:43474"/>
        <dbReference type="ChEBI" id="CHEBI:58359"/>
        <dbReference type="ChEBI" id="CHEBI:78520"/>
        <dbReference type="ChEBI" id="CHEBI:78521"/>
        <dbReference type="ChEBI" id="CHEBI:456216"/>
    </reaction>
</comment>
<comment type="catalytic activity">
    <reaction evidence="1">
        <text>L-aspartyl-tRNA(Asn) + L-glutamine + ATP + H2O = L-asparaginyl-tRNA(Asn) + L-glutamate + ADP + phosphate + 2 H(+)</text>
        <dbReference type="Rhea" id="RHEA:14513"/>
        <dbReference type="Rhea" id="RHEA-COMP:9674"/>
        <dbReference type="Rhea" id="RHEA-COMP:9677"/>
        <dbReference type="ChEBI" id="CHEBI:15377"/>
        <dbReference type="ChEBI" id="CHEBI:15378"/>
        <dbReference type="ChEBI" id="CHEBI:29985"/>
        <dbReference type="ChEBI" id="CHEBI:30616"/>
        <dbReference type="ChEBI" id="CHEBI:43474"/>
        <dbReference type="ChEBI" id="CHEBI:58359"/>
        <dbReference type="ChEBI" id="CHEBI:78515"/>
        <dbReference type="ChEBI" id="CHEBI:78516"/>
        <dbReference type="ChEBI" id="CHEBI:456216"/>
    </reaction>
</comment>
<comment type="subunit">
    <text evidence="1">Heterotrimer of A, B and C subunits.</text>
</comment>
<comment type="similarity">
    <text evidence="1">Belongs to the GatC family.</text>
</comment>
<evidence type="ECO:0000255" key="1">
    <source>
        <dbReference type="HAMAP-Rule" id="MF_00122"/>
    </source>
</evidence>